<proteinExistence type="inferred from homology"/>
<keyword id="KW-0963">Cytoplasm</keyword>
<keyword id="KW-0210">Decarboxylase</keyword>
<keyword id="KW-0312">Gluconeogenesis</keyword>
<keyword id="KW-0342">GTP-binding</keyword>
<keyword id="KW-0456">Lyase</keyword>
<keyword id="KW-0464">Manganese</keyword>
<keyword id="KW-0479">Metal-binding</keyword>
<keyword id="KW-0547">Nucleotide-binding</keyword>
<name>PCKG_PYRAB</name>
<gene>
    <name evidence="1" type="primary">pckG</name>
    <name type="ordered locus">PYRAB16550</name>
    <name type="ORF">PAB1253</name>
</gene>
<feature type="chain" id="PRO_0000103617" description="Phosphoenolpyruvate carboxykinase [GTP]">
    <location>
        <begin position="1"/>
        <end position="618"/>
    </location>
</feature>
<feature type="active site" evidence="1">
    <location>
        <position position="269"/>
    </location>
</feature>
<feature type="binding site" evidence="1">
    <location>
        <position position="83"/>
    </location>
    <ligand>
        <name>substrate</name>
    </ligand>
</feature>
<feature type="binding site" evidence="1">
    <location>
        <begin position="217"/>
        <end position="219"/>
    </location>
    <ligand>
        <name>substrate</name>
    </ligand>
</feature>
<feature type="binding site" evidence="1">
    <location>
        <position position="226"/>
    </location>
    <ligand>
        <name>Mn(2+)</name>
        <dbReference type="ChEBI" id="CHEBI:29035"/>
    </ligand>
</feature>
<feature type="binding site" evidence="1">
    <location>
        <position position="245"/>
    </location>
    <ligand>
        <name>Mn(2+)</name>
        <dbReference type="ChEBI" id="CHEBI:29035"/>
    </ligand>
</feature>
<feature type="binding site" evidence="1">
    <location>
        <position position="267"/>
    </location>
    <ligand>
        <name>substrate</name>
    </ligand>
</feature>
<feature type="binding site" evidence="1">
    <location>
        <begin position="268"/>
        <end position="273"/>
    </location>
    <ligand>
        <name>GTP</name>
        <dbReference type="ChEBI" id="CHEBI:37565"/>
    </ligand>
</feature>
<feature type="binding site" evidence="1">
    <location>
        <position position="286"/>
    </location>
    <ligand>
        <name>Mn(2+)</name>
        <dbReference type="ChEBI" id="CHEBI:29035"/>
    </ligand>
</feature>
<feature type="binding site" evidence="1">
    <location>
        <begin position="381"/>
        <end position="383"/>
    </location>
    <ligand>
        <name>substrate</name>
    </ligand>
</feature>
<feature type="binding site" evidence="1">
    <location>
        <position position="383"/>
    </location>
    <ligand>
        <name>GTP</name>
        <dbReference type="ChEBI" id="CHEBI:37565"/>
    </ligand>
</feature>
<feature type="binding site" evidence="1">
    <location>
        <position position="415"/>
    </location>
    <ligand>
        <name>GTP</name>
        <dbReference type="ChEBI" id="CHEBI:37565"/>
    </ligand>
</feature>
<dbReference type="EC" id="4.1.1.32" evidence="1"/>
<dbReference type="EMBL" id="AJ248288">
    <property type="protein sequence ID" value="CAB50559.1"/>
    <property type="molecule type" value="Genomic_DNA"/>
</dbReference>
<dbReference type="EMBL" id="HE613800">
    <property type="protein sequence ID" value="CCE71123.1"/>
    <property type="molecule type" value="Genomic_DNA"/>
</dbReference>
<dbReference type="PIR" id="A75015">
    <property type="entry name" value="A75015"/>
</dbReference>
<dbReference type="RefSeq" id="WP_010868773.1">
    <property type="nucleotide sequence ID" value="NC_000868.1"/>
</dbReference>
<dbReference type="SMR" id="Q9UY53"/>
<dbReference type="STRING" id="272844.PAB1253"/>
<dbReference type="KEGG" id="pab:PAB1253"/>
<dbReference type="PATRIC" id="fig|272844.11.peg.1769"/>
<dbReference type="eggNOG" id="arCOG05865">
    <property type="taxonomic scope" value="Archaea"/>
</dbReference>
<dbReference type="HOGENOM" id="CLU_028872_1_1_2"/>
<dbReference type="OrthoDB" id="55875at2157"/>
<dbReference type="PhylomeDB" id="Q9UY53"/>
<dbReference type="UniPathway" id="UPA00138"/>
<dbReference type="Proteomes" id="UP000000810">
    <property type="component" value="Chromosome"/>
</dbReference>
<dbReference type="Proteomes" id="UP000009139">
    <property type="component" value="Chromosome"/>
</dbReference>
<dbReference type="GO" id="GO:0005829">
    <property type="term" value="C:cytosol"/>
    <property type="evidence" value="ECO:0007669"/>
    <property type="project" value="TreeGrafter"/>
</dbReference>
<dbReference type="GO" id="GO:0005525">
    <property type="term" value="F:GTP binding"/>
    <property type="evidence" value="ECO:0007669"/>
    <property type="project" value="UniProtKB-UniRule"/>
</dbReference>
<dbReference type="GO" id="GO:0030145">
    <property type="term" value="F:manganese ion binding"/>
    <property type="evidence" value="ECO:0007669"/>
    <property type="project" value="UniProtKB-UniRule"/>
</dbReference>
<dbReference type="GO" id="GO:0004613">
    <property type="term" value="F:phosphoenolpyruvate carboxykinase (GTP) activity"/>
    <property type="evidence" value="ECO:0007669"/>
    <property type="project" value="UniProtKB-UniRule"/>
</dbReference>
<dbReference type="GO" id="GO:0071333">
    <property type="term" value="P:cellular response to glucose stimulus"/>
    <property type="evidence" value="ECO:0007669"/>
    <property type="project" value="TreeGrafter"/>
</dbReference>
<dbReference type="GO" id="GO:0006094">
    <property type="term" value="P:gluconeogenesis"/>
    <property type="evidence" value="ECO:0007669"/>
    <property type="project" value="UniProtKB-UniRule"/>
</dbReference>
<dbReference type="GO" id="GO:0046327">
    <property type="term" value="P:glycerol biosynthetic process from pyruvate"/>
    <property type="evidence" value="ECO:0007669"/>
    <property type="project" value="TreeGrafter"/>
</dbReference>
<dbReference type="GO" id="GO:0006107">
    <property type="term" value="P:oxaloacetate metabolic process"/>
    <property type="evidence" value="ECO:0007669"/>
    <property type="project" value="TreeGrafter"/>
</dbReference>
<dbReference type="GO" id="GO:0019543">
    <property type="term" value="P:propionate catabolic process"/>
    <property type="evidence" value="ECO:0007669"/>
    <property type="project" value="TreeGrafter"/>
</dbReference>
<dbReference type="GO" id="GO:0033993">
    <property type="term" value="P:response to lipid"/>
    <property type="evidence" value="ECO:0007669"/>
    <property type="project" value="TreeGrafter"/>
</dbReference>
<dbReference type="GO" id="GO:0042594">
    <property type="term" value="P:response to starvation"/>
    <property type="evidence" value="ECO:0007669"/>
    <property type="project" value="TreeGrafter"/>
</dbReference>
<dbReference type="CDD" id="cd00819">
    <property type="entry name" value="PEPCK_GTP"/>
    <property type="match status" value="1"/>
</dbReference>
<dbReference type="FunFam" id="3.40.449.10:FF:000010">
    <property type="entry name" value="Phosphoenolpyruvate carboxykinase [GTP]"/>
    <property type="match status" value="1"/>
</dbReference>
<dbReference type="Gene3D" id="3.90.228.20">
    <property type="match status" value="1"/>
</dbReference>
<dbReference type="Gene3D" id="3.40.449.10">
    <property type="entry name" value="Phosphoenolpyruvate Carboxykinase, domain 1"/>
    <property type="match status" value="1"/>
</dbReference>
<dbReference type="Gene3D" id="2.170.8.10">
    <property type="entry name" value="Phosphoenolpyruvate Carboxykinase, domain 2"/>
    <property type="match status" value="1"/>
</dbReference>
<dbReference type="HAMAP" id="MF_00452">
    <property type="entry name" value="PEPCK_GTP"/>
    <property type="match status" value="1"/>
</dbReference>
<dbReference type="InterPro" id="IPR018091">
    <property type="entry name" value="PEP_carboxykin_GTP_CS"/>
</dbReference>
<dbReference type="InterPro" id="IPR013035">
    <property type="entry name" value="PEP_carboxykinase_C"/>
</dbReference>
<dbReference type="InterPro" id="IPR008209">
    <property type="entry name" value="PEP_carboxykinase_GTP"/>
</dbReference>
<dbReference type="InterPro" id="IPR035077">
    <property type="entry name" value="PEP_carboxykinase_GTP_C"/>
</dbReference>
<dbReference type="InterPro" id="IPR035078">
    <property type="entry name" value="PEP_carboxykinase_GTP_N"/>
</dbReference>
<dbReference type="InterPro" id="IPR008210">
    <property type="entry name" value="PEP_carboxykinase_N"/>
</dbReference>
<dbReference type="NCBIfam" id="NF003253">
    <property type="entry name" value="PRK04210.1"/>
    <property type="match status" value="1"/>
</dbReference>
<dbReference type="PANTHER" id="PTHR11561">
    <property type="entry name" value="PHOSPHOENOLPYRUVATE CARBOXYKINASE"/>
    <property type="match status" value="1"/>
</dbReference>
<dbReference type="PANTHER" id="PTHR11561:SF0">
    <property type="entry name" value="PHOSPHOENOLPYRUVATE CARBOXYKINASE [GTP]-RELATED"/>
    <property type="match status" value="1"/>
</dbReference>
<dbReference type="Pfam" id="PF00821">
    <property type="entry name" value="PEPCK_GTP"/>
    <property type="match status" value="1"/>
</dbReference>
<dbReference type="Pfam" id="PF17297">
    <property type="entry name" value="PEPCK_N"/>
    <property type="match status" value="1"/>
</dbReference>
<dbReference type="PIRSF" id="PIRSF001348">
    <property type="entry name" value="PEP_carboxykinase_GTP"/>
    <property type="match status" value="1"/>
</dbReference>
<dbReference type="SUPFAM" id="SSF68923">
    <property type="entry name" value="PEP carboxykinase N-terminal domain"/>
    <property type="match status" value="1"/>
</dbReference>
<dbReference type="SUPFAM" id="SSF53795">
    <property type="entry name" value="PEP carboxykinase-like"/>
    <property type="match status" value="1"/>
</dbReference>
<dbReference type="PROSITE" id="PS00505">
    <property type="entry name" value="PEPCK_GTP"/>
    <property type="match status" value="1"/>
</dbReference>
<evidence type="ECO:0000255" key="1">
    <source>
        <dbReference type="HAMAP-Rule" id="MF_00452"/>
    </source>
</evidence>
<protein>
    <recommendedName>
        <fullName evidence="1">Phosphoenolpyruvate carboxykinase [GTP]</fullName>
        <shortName evidence="1">PEP carboxykinase</shortName>
        <shortName evidence="1">PEPCK</shortName>
        <ecNumber evidence="1">4.1.1.32</ecNumber>
    </recommendedName>
</protein>
<accession>Q9UY53</accession>
<accession>G8ZK16</accession>
<organism>
    <name type="scientific">Pyrococcus abyssi (strain GE5 / Orsay)</name>
    <dbReference type="NCBI Taxonomy" id="272844"/>
    <lineage>
        <taxon>Archaea</taxon>
        <taxon>Methanobacteriati</taxon>
        <taxon>Methanobacteriota</taxon>
        <taxon>Thermococci</taxon>
        <taxon>Thermococcales</taxon>
        <taxon>Thermococcaceae</taxon>
        <taxon>Pyrococcus</taxon>
    </lineage>
</organism>
<comment type="function">
    <text evidence="1">Catalyzes the conversion of oxaloacetate (OAA) to phosphoenolpyruvate (PEP), the rate-limiting step in the metabolic pathway that produces glucose from lactate and other precursors derived from the citric acid cycle.</text>
</comment>
<comment type="catalytic activity">
    <reaction evidence="1">
        <text>oxaloacetate + GTP = phosphoenolpyruvate + GDP + CO2</text>
        <dbReference type="Rhea" id="RHEA:10388"/>
        <dbReference type="ChEBI" id="CHEBI:16452"/>
        <dbReference type="ChEBI" id="CHEBI:16526"/>
        <dbReference type="ChEBI" id="CHEBI:37565"/>
        <dbReference type="ChEBI" id="CHEBI:58189"/>
        <dbReference type="ChEBI" id="CHEBI:58702"/>
        <dbReference type="EC" id="4.1.1.32"/>
    </reaction>
</comment>
<comment type="cofactor">
    <cofactor evidence="1">
        <name>Mn(2+)</name>
        <dbReference type="ChEBI" id="CHEBI:29035"/>
    </cofactor>
    <text evidence="1">Binds 1 Mn(2+) ion per subunit.</text>
</comment>
<comment type="pathway">
    <text evidence="1">Carbohydrate biosynthesis; gluconeogenesis.</text>
</comment>
<comment type="subcellular location">
    <subcellularLocation>
        <location evidence="1">Cytoplasm</location>
    </subcellularLocation>
</comment>
<comment type="similarity">
    <text evidence="1">Belongs to the phosphoenolpyruvate carboxykinase [GTP] family.</text>
</comment>
<sequence length="618" mass="71880">MEKLKRFLPEDQYEKLAAINNPYLHEFLAEWIEWLKPSKVFVCTDSPEDEEYVRWKALYYGEEKMLEMPRHTVHYDNYYDQARDKANTKLLVPKGVTLPFLNTMDREEGLKEIREIMKGIMKGKELFICFFVLGPRNSIFTIPAVQLTDSAYVAHSEFLLYRKGYEEFKRLGPTKNFLKFVHSAGELDERKTSKNLDKRRIYIDLVDETVYSANTQYGGNTIGLKKLAFRLTIQRAVREGWLSEHMFLMRVNGPNGRKTYFTGAYPSMCGKTSTAMIPWENIVGDDLVFIKNVDGTARAVNVEIGVFGIIEGINEKDDPIIWQVLHSPVEIIFSNVLVKDGKPYWNGMGIEIPDEGENHSGKWWRGKRDKEGNEIPPSHKNARFTVRLEAFPNLDKEALENPCGVEVGGMIFGGRDPDTWPPVREAFDWEHGVITMGASLESETTAATLGKEGVRAFNPMSILDFLSVHLGDYIRNYLEFGRKLKKKPKIFAVNYFLRENGKWLNEKLDKAVWLKWMELRVHGDVEAIETPIGYIPKYEDLRELFKQVLNKEYKKEDYEKQFKIRVPELLAKIDRIWNIYEPIGNIPEELFKQLEEERERLLKAREKYGDYISPFSLL</sequence>
<reference key="1">
    <citation type="journal article" date="2003" name="Mol. Microbiol.">
        <title>An integrated analysis of the genome of the hyperthermophilic archaeon Pyrococcus abyssi.</title>
        <authorList>
            <person name="Cohen G.N."/>
            <person name="Barbe V."/>
            <person name="Flament D."/>
            <person name="Galperin M."/>
            <person name="Heilig R."/>
            <person name="Lecompte O."/>
            <person name="Poch O."/>
            <person name="Prieur D."/>
            <person name="Querellou J."/>
            <person name="Ripp R."/>
            <person name="Thierry J.-C."/>
            <person name="Van der Oost J."/>
            <person name="Weissenbach J."/>
            <person name="Zivanovic Y."/>
            <person name="Forterre P."/>
        </authorList>
    </citation>
    <scope>NUCLEOTIDE SEQUENCE [LARGE SCALE GENOMIC DNA]</scope>
    <source>
        <strain>GE5 / Orsay</strain>
    </source>
</reference>
<reference key="2">
    <citation type="journal article" date="2012" name="Curr. Microbiol.">
        <title>Re-annotation of two hyperthermophilic archaea Pyrococcus abyssi GE5 and Pyrococcus furiosus DSM 3638.</title>
        <authorList>
            <person name="Gao J."/>
            <person name="Wang J."/>
        </authorList>
    </citation>
    <scope>GENOME REANNOTATION</scope>
    <source>
        <strain>GE5 / Orsay</strain>
    </source>
</reference>